<reference key="1">
    <citation type="submission" date="2008-02" db="EMBL/GenBank/DDBJ databases">
        <title>Complete sequence of Synechococcus sp. PCC 7002.</title>
        <authorList>
            <person name="Li T."/>
            <person name="Zhao J."/>
            <person name="Zhao C."/>
            <person name="Liu Z."/>
            <person name="Zhao F."/>
            <person name="Marquardt J."/>
            <person name="Nomura C.T."/>
            <person name="Persson S."/>
            <person name="Detter J.C."/>
            <person name="Richardson P.M."/>
            <person name="Lanz C."/>
            <person name="Schuster S.C."/>
            <person name="Wang J."/>
            <person name="Li S."/>
            <person name="Huang X."/>
            <person name="Cai T."/>
            <person name="Yu Z."/>
            <person name="Luo J."/>
            <person name="Zhao J."/>
            <person name="Bryant D.A."/>
        </authorList>
    </citation>
    <scope>NUCLEOTIDE SEQUENCE [LARGE SCALE GENOMIC DNA]</scope>
    <source>
        <strain>ATCC 27264 / PCC 7002 / PR-6</strain>
    </source>
</reference>
<dbReference type="EC" id="7.1.1.-" evidence="1"/>
<dbReference type="EMBL" id="CP000951">
    <property type="protein sequence ID" value="ACB00078.1"/>
    <property type="molecule type" value="Genomic_DNA"/>
</dbReference>
<dbReference type="RefSeq" id="WP_012307699.1">
    <property type="nucleotide sequence ID" value="NZ_JAHHPU010000002.1"/>
</dbReference>
<dbReference type="SMR" id="B1XI93"/>
<dbReference type="STRING" id="32049.SYNPCC7002_A2094"/>
<dbReference type="KEGG" id="syp:SYNPCC7002_A2094"/>
<dbReference type="eggNOG" id="ENOG5032XZT">
    <property type="taxonomic scope" value="Bacteria"/>
</dbReference>
<dbReference type="HOGENOM" id="CLU_195299_0_0_3"/>
<dbReference type="Proteomes" id="UP000001688">
    <property type="component" value="Chromosome"/>
</dbReference>
<dbReference type="GO" id="GO:0031676">
    <property type="term" value="C:plasma membrane-derived thylakoid membrane"/>
    <property type="evidence" value="ECO:0007669"/>
    <property type="project" value="UniProtKB-SubCell"/>
</dbReference>
<dbReference type="GO" id="GO:0016655">
    <property type="term" value="F:oxidoreductase activity, acting on NAD(P)H, quinone or similar compound as acceptor"/>
    <property type="evidence" value="ECO:0007669"/>
    <property type="project" value="UniProtKB-UniRule"/>
</dbReference>
<dbReference type="GO" id="GO:0048038">
    <property type="term" value="F:quinone binding"/>
    <property type="evidence" value="ECO:0007669"/>
    <property type="project" value="UniProtKB-KW"/>
</dbReference>
<dbReference type="HAMAP" id="MF_01354">
    <property type="entry name" value="NDH1_NDH1O"/>
    <property type="match status" value="1"/>
</dbReference>
<dbReference type="InterPro" id="IPR020905">
    <property type="entry name" value="NdhO"/>
</dbReference>
<dbReference type="Pfam" id="PF11910">
    <property type="entry name" value="NdhO"/>
    <property type="match status" value="1"/>
</dbReference>
<name>NDHO_PICP2</name>
<protein>
    <recommendedName>
        <fullName evidence="1">NAD(P)H-quinone oxidoreductase subunit O</fullName>
        <ecNumber evidence="1">7.1.1.-</ecNumber>
    </recommendedName>
    <alternativeName>
        <fullName evidence="1">NAD(P)H dehydrogenase I subunit O</fullName>
    </alternativeName>
    <alternativeName>
        <fullName>NDH-1 subunit O</fullName>
    </alternativeName>
    <alternativeName>
        <fullName>NDH-O</fullName>
    </alternativeName>
</protein>
<comment type="function">
    <text evidence="1">NDH-1 shuttles electrons from an unknown electron donor, via FMN and iron-sulfur (Fe-S) centers, to quinones in the respiratory and/or the photosynthetic chain. The immediate electron acceptor for the enzyme in this species is believed to be plastoquinone. Couples the redox reaction to proton translocation, and thus conserves the redox energy in a proton gradient. Cyanobacterial NDH-1 also plays a role in inorganic carbon-concentration.</text>
</comment>
<comment type="catalytic activity">
    <reaction evidence="1">
        <text>a plastoquinone + NADH + (n+1) H(+)(in) = a plastoquinol + NAD(+) + n H(+)(out)</text>
        <dbReference type="Rhea" id="RHEA:42608"/>
        <dbReference type="Rhea" id="RHEA-COMP:9561"/>
        <dbReference type="Rhea" id="RHEA-COMP:9562"/>
        <dbReference type="ChEBI" id="CHEBI:15378"/>
        <dbReference type="ChEBI" id="CHEBI:17757"/>
        <dbReference type="ChEBI" id="CHEBI:57540"/>
        <dbReference type="ChEBI" id="CHEBI:57945"/>
        <dbReference type="ChEBI" id="CHEBI:62192"/>
    </reaction>
</comment>
<comment type="catalytic activity">
    <reaction evidence="1">
        <text>a plastoquinone + NADPH + (n+1) H(+)(in) = a plastoquinol + NADP(+) + n H(+)(out)</text>
        <dbReference type="Rhea" id="RHEA:42612"/>
        <dbReference type="Rhea" id="RHEA-COMP:9561"/>
        <dbReference type="Rhea" id="RHEA-COMP:9562"/>
        <dbReference type="ChEBI" id="CHEBI:15378"/>
        <dbReference type="ChEBI" id="CHEBI:17757"/>
        <dbReference type="ChEBI" id="CHEBI:57783"/>
        <dbReference type="ChEBI" id="CHEBI:58349"/>
        <dbReference type="ChEBI" id="CHEBI:62192"/>
    </reaction>
</comment>
<comment type="subunit">
    <text evidence="1">NDH-1 can be composed of about 15 different subunits; different subcomplexes with different compositions have been identified which probably have different functions.</text>
</comment>
<comment type="subcellular location">
    <subcellularLocation>
        <location evidence="1">Cellular thylakoid membrane</location>
        <topology evidence="1">Peripheral membrane protein</topology>
        <orientation evidence="1">Cytoplasmic side</orientation>
    </subcellularLocation>
</comment>
<comment type="similarity">
    <text evidence="1">Belongs to the complex I NdhO subunit family.</text>
</comment>
<feature type="chain" id="PRO_0000353653" description="NAD(P)H-quinone oxidoreductase subunit O">
    <location>
        <begin position="1"/>
        <end position="71"/>
    </location>
</feature>
<sequence length="71" mass="8072">MAAKLKKGSLVRVIKEQFTNSLEAKASDSRLPAYFFGSQGEILDLDDEYAFVRFYTPTPSVWLRLDQLEAV</sequence>
<gene>
    <name evidence="1" type="primary">ndhO</name>
    <name type="ordered locus">SYNPCC7002_A2094</name>
</gene>
<proteinExistence type="inferred from homology"/>
<accession>B1XI93</accession>
<organism>
    <name type="scientific">Picosynechococcus sp. (strain ATCC 27264 / PCC 7002 / PR-6)</name>
    <name type="common">Agmenellum quadruplicatum</name>
    <dbReference type="NCBI Taxonomy" id="32049"/>
    <lineage>
        <taxon>Bacteria</taxon>
        <taxon>Bacillati</taxon>
        <taxon>Cyanobacteriota</taxon>
        <taxon>Cyanophyceae</taxon>
        <taxon>Oscillatoriophycideae</taxon>
        <taxon>Chroococcales</taxon>
        <taxon>Geminocystaceae</taxon>
        <taxon>Picosynechococcus</taxon>
    </lineage>
</organism>
<evidence type="ECO:0000255" key="1">
    <source>
        <dbReference type="HAMAP-Rule" id="MF_01354"/>
    </source>
</evidence>
<keyword id="KW-0472">Membrane</keyword>
<keyword id="KW-0520">NAD</keyword>
<keyword id="KW-0521">NADP</keyword>
<keyword id="KW-0618">Plastoquinone</keyword>
<keyword id="KW-0874">Quinone</keyword>
<keyword id="KW-1185">Reference proteome</keyword>
<keyword id="KW-0793">Thylakoid</keyword>
<keyword id="KW-1278">Translocase</keyword>
<keyword id="KW-0813">Transport</keyword>